<comment type="function">
    <text evidence="4 5">Phosphodiesterase specific for cGMP, which is not activated by cGMP. Involved in the degradation of intracellular cGMP.</text>
</comment>
<comment type="catalytic activity">
    <reaction evidence="4">
        <text>3',5'-cyclic GMP + H2O = GMP + H(+)</text>
        <dbReference type="Rhea" id="RHEA:16957"/>
        <dbReference type="ChEBI" id="CHEBI:15377"/>
        <dbReference type="ChEBI" id="CHEBI:15378"/>
        <dbReference type="ChEBI" id="CHEBI:57746"/>
        <dbReference type="ChEBI" id="CHEBI:58115"/>
        <dbReference type="EC" id="3.1.4.35"/>
    </reaction>
    <physiologicalReaction direction="left-to-right" evidence="4">
        <dbReference type="Rhea" id="RHEA:16958"/>
    </physiologicalReaction>
</comment>
<comment type="cofactor">
    <cofactor evidence="1">
        <name>a divalent metal cation</name>
        <dbReference type="ChEBI" id="CHEBI:60240"/>
    </cofactor>
    <text evidence="1">Binds 2 divalent metal cations per subunit. Site 1 may preferentially bind zinc ions, while site 2 has a preference for magnesium and/or manganese ions.</text>
</comment>
<comment type="activity regulation">
    <text>Inhibited by 3-isobutyl-1-methylxanthine (IBMX).</text>
</comment>
<comment type="biophysicochemical properties">
    <kinetics>
        <KM evidence="4">0.22 uM for cGMP</KM>
        <Vmax evidence="4">2.0 pmol/min/mg enzyme with cGMP as substrate</Vmax>
        <text evidence="4">cAMP/cGMP selectivity of 0.0015.</text>
    </kinetics>
</comment>
<comment type="subcellular location">
    <subcellularLocation>
        <location evidence="5 6">Cytoplasm</location>
        <location evidence="5 6">Cytosol</location>
    </subcellularLocation>
</comment>
<comment type="developmental stage">
    <text evidence="4">Expression is constant throughout the development.</text>
</comment>
<comment type="domain">
    <text>Composed of a C-terminal catalytic domain containing two putative divalent metal sites and an N-terminal regulatory domain.</text>
</comment>
<comment type="disruption phenotype">
    <text evidence="4">Shows a moderate phenotype with increased basal cGMP levels, but only a small effect on cAMP-stimulated cGMP levels.</text>
</comment>
<comment type="similarity">
    <text evidence="8">Belongs to the cyclic nucleotide phosphodiesterase family.</text>
</comment>
<comment type="sequence caution" evidence="8">
    <conflict type="erroneous gene model prediction">
        <sequence resource="EMBL-CDS" id="AAN78319"/>
    </conflict>
</comment>
<keyword id="KW-0140">cGMP</keyword>
<keyword id="KW-0142">cGMP-binding</keyword>
<keyword id="KW-0963">Cytoplasm</keyword>
<keyword id="KW-0378">Hydrolase</keyword>
<keyword id="KW-0464">Manganese</keyword>
<keyword id="KW-0479">Metal-binding</keyword>
<keyword id="KW-0547">Nucleotide-binding</keyword>
<keyword id="KW-1185">Reference proteome</keyword>
<reference key="1">
    <citation type="journal article" date="2001" name="Biochem. J.">
        <title>Identification and characterization of DdPDE3, a cGMP-selective phosphodiesterase from Dictyostelium.</title>
        <authorList>
            <person name="Kuwayama H."/>
            <person name="Snippe H."/>
            <person name="Derks M."/>
            <person name="Roelofs J."/>
            <person name="Van Haastert P.J.M."/>
        </authorList>
    </citation>
    <scope>NUCLEOTIDE SEQUENCE [GENOMIC DNA]</scope>
    <scope>FUNCTION</scope>
    <scope>CATALYTIC ACTIVITY</scope>
    <scope>BIOPHYSICOCHEMICAL PROPERTIES</scope>
    <scope>CHARACTERIZATION</scope>
    <scope>DEVELOPMENTAL STAGE</scope>
    <scope>DISRUPTION PHENOTYPE</scope>
</reference>
<reference key="2">
    <citation type="journal article" date="2005" name="Nature">
        <title>The genome of the social amoeba Dictyostelium discoideum.</title>
        <authorList>
            <person name="Eichinger L."/>
            <person name="Pachebat J.A."/>
            <person name="Gloeckner G."/>
            <person name="Rajandream M.A."/>
            <person name="Sucgang R."/>
            <person name="Berriman M."/>
            <person name="Song J."/>
            <person name="Olsen R."/>
            <person name="Szafranski K."/>
            <person name="Xu Q."/>
            <person name="Tunggal B."/>
            <person name="Kummerfeld S."/>
            <person name="Madera M."/>
            <person name="Konfortov B.A."/>
            <person name="Rivero F."/>
            <person name="Bankier A.T."/>
            <person name="Lehmann R."/>
            <person name="Hamlin N."/>
            <person name="Davies R."/>
            <person name="Gaudet P."/>
            <person name="Fey P."/>
            <person name="Pilcher K."/>
            <person name="Chen G."/>
            <person name="Saunders D."/>
            <person name="Sodergren E.J."/>
            <person name="Davis P."/>
            <person name="Kerhornou A."/>
            <person name="Nie X."/>
            <person name="Hall N."/>
            <person name="Anjard C."/>
            <person name="Hemphill L."/>
            <person name="Bason N."/>
            <person name="Farbrother P."/>
            <person name="Desany B."/>
            <person name="Just E."/>
            <person name="Morio T."/>
            <person name="Rost R."/>
            <person name="Churcher C.M."/>
            <person name="Cooper J."/>
            <person name="Haydock S."/>
            <person name="van Driessche N."/>
            <person name="Cronin A."/>
            <person name="Goodhead I."/>
            <person name="Muzny D.M."/>
            <person name="Mourier T."/>
            <person name="Pain A."/>
            <person name="Lu M."/>
            <person name="Harper D."/>
            <person name="Lindsay R."/>
            <person name="Hauser H."/>
            <person name="James K.D."/>
            <person name="Quiles M."/>
            <person name="Madan Babu M."/>
            <person name="Saito T."/>
            <person name="Buchrieser C."/>
            <person name="Wardroper A."/>
            <person name="Felder M."/>
            <person name="Thangavelu M."/>
            <person name="Johnson D."/>
            <person name="Knights A."/>
            <person name="Loulseged H."/>
            <person name="Mungall K.L."/>
            <person name="Oliver K."/>
            <person name="Price C."/>
            <person name="Quail M.A."/>
            <person name="Urushihara H."/>
            <person name="Hernandez J."/>
            <person name="Rabbinowitsch E."/>
            <person name="Steffen D."/>
            <person name="Sanders M."/>
            <person name="Ma J."/>
            <person name="Kohara Y."/>
            <person name="Sharp S."/>
            <person name="Simmonds M.N."/>
            <person name="Spiegler S."/>
            <person name="Tivey A."/>
            <person name="Sugano S."/>
            <person name="White B."/>
            <person name="Walker D."/>
            <person name="Woodward J.R."/>
            <person name="Winckler T."/>
            <person name="Tanaka Y."/>
            <person name="Shaulsky G."/>
            <person name="Schleicher M."/>
            <person name="Weinstock G.M."/>
            <person name="Rosenthal A."/>
            <person name="Cox E.C."/>
            <person name="Chisholm R.L."/>
            <person name="Gibbs R.A."/>
            <person name="Loomis W.F."/>
            <person name="Platzer M."/>
            <person name="Kay R.R."/>
            <person name="Williams J.G."/>
            <person name="Dear P.H."/>
            <person name="Noegel A.A."/>
            <person name="Barrell B.G."/>
            <person name="Kuspa A."/>
        </authorList>
    </citation>
    <scope>NUCLEOTIDE SEQUENCE [LARGE SCALE GENOMIC DNA]</scope>
    <source>
        <strain>AX4</strain>
    </source>
</reference>
<reference key="3">
    <citation type="journal article" date="2002" name="Mol. Biol. Cell">
        <title>Identification and characterization of two unusual cGMP-stimulated phosphodiesterases in dictyostelium.</title>
        <authorList>
            <person name="Bosgraaf L."/>
            <person name="Russcher H."/>
            <person name="Snippe H."/>
            <person name="Bader S."/>
            <person name="Wind J."/>
            <person name="Van Haastert P.J.M."/>
        </authorList>
    </citation>
    <scope>FUNCTION</scope>
    <scope>SUBCELLULAR LOCATION</scope>
</reference>
<reference key="4">
    <citation type="journal article" date="2005" name="Bioinformatics">
        <title>Microarray phenotyping in Dictyostelium reveals a regulon of chemotaxis genes.</title>
        <authorList>
            <person name="Booth E.O."/>
            <person name="Van Driessche N."/>
            <person name="Zhuchenko O."/>
            <person name="Kuspa A."/>
            <person name="Shaulsky G."/>
        </authorList>
    </citation>
    <scope>IDENTIFICATION</scope>
</reference>
<reference key="5">
    <citation type="journal article" date="2007" name="Biochem. J.">
        <title>Seven Dictyostelium discoideum phosphodiesterases degrade three pools of cAMP and cGMP.</title>
        <authorList>
            <person name="Bader S."/>
            <person name="Kortholt A."/>
            <person name="Van Haastert P.J.M."/>
        </authorList>
    </citation>
    <scope>SUBCELLULAR LOCATION</scope>
</reference>
<organism>
    <name type="scientific">Dictyostelium discoideum</name>
    <name type="common">Social amoeba</name>
    <dbReference type="NCBI Taxonomy" id="44689"/>
    <lineage>
        <taxon>Eukaryota</taxon>
        <taxon>Amoebozoa</taxon>
        <taxon>Evosea</taxon>
        <taxon>Eumycetozoa</taxon>
        <taxon>Dictyostelia</taxon>
        <taxon>Dictyosteliales</taxon>
        <taxon>Dictyosteliaceae</taxon>
        <taxon>Dictyostelium</taxon>
    </lineage>
</organism>
<sequence length="466" mass="53121">MAPQQNIMKQLQQMQSSPYPSSSPSSTTVSQNNDNLNHNVHSLNNSSNNNNNNNNNNNNNNNNNNNNNNNNNNNNNNNNNNNNSINEKNKINDNNNRGNSDDGNNNNSNNNSNNNNSNNNNRDDEEEEGDDEDNNNNNNSNNNKIRGYNDNNDINDIFSINFSSWSKSKDNLIENGVLIFEESGLYKELNLSKSSILNFLSIVASSYRNNPFHSFNHAIAVTQTIFLILLKTNLFNILSPIEKLSIIIASICHDLDHPALSNRFQINMKSSIAVLYNNKSVLENHHLSICLGILESKIGNELLSTLTVEEKKQFFRRVKILILATDMENHFTYKKQFDDIISTFSWDNSEHRDLLLIMFLKSADISNELRSFDISNKWANALMEEFFNQSDLEKLNNLPLTPFMEREKVVLHLTQVSFIEKFLLPSYQSLQNLLPSLEDFVQRIIENKEIWSNNGSSSSTTSSSPN</sequence>
<dbReference type="EC" id="3.1.4.35" evidence="4"/>
<dbReference type="EMBL" id="AY162269">
    <property type="protein sequence ID" value="AAN78319.1"/>
    <property type="status" value="ALT_SEQ"/>
    <property type="molecule type" value="Genomic_DNA"/>
</dbReference>
<dbReference type="EMBL" id="AAFI02000004">
    <property type="protein sequence ID" value="EDR41121.1"/>
    <property type="molecule type" value="Genomic_DNA"/>
</dbReference>
<dbReference type="RefSeq" id="XP_001732951.1">
    <property type="nucleotide sequence ID" value="XM_001732899.1"/>
</dbReference>
<dbReference type="SMR" id="B0G0Y8"/>
<dbReference type="STRING" id="44689.B0G0Y8"/>
<dbReference type="PaxDb" id="44689-DDB0233681"/>
<dbReference type="EnsemblProtists" id="EDR41121">
    <property type="protein sequence ID" value="EDR41121"/>
    <property type="gene ID" value="DDB_G0268634"/>
</dbReference>
<dbReference type="GeneID" id="8616668"/>
<dbReference type="KEGG" id="ddi:DDB_G0268634"/>
<dbReference type="dictyBase" id="DDB_G0268634">
    <property type="gene designation" value="pde3"/>
</dbReference>
<dbReference type="VEuPathDB" id="AmoebaDB:DDB_G0268634"/>
<dbReference type="eggNOG" id="KOG3689">
    <property type="taxonomic scope" value="Eukaryota"/>
</dbReference>
<dbReference type="HOGENOM" id="CLU_587163_0_0_1"/>
<dbReference type="InParanoid" id="B0G0Y8"/>
<dbReference type="OMA" id="HYTSREM"/>
<dbReference type="PhylomeDB" id="B0G0Y8"/>
<dbReference type="Reactome" id="R-DDI-111957">
    <property type="pathway name" value="Cam-PDE 1 activation"/>
</dbReference>
<dbReference type="Reactome" id="R-DDI-165160">
    <property type="pathway name" value="PDE3B signalling"/>
</dbReference>
<dbReference type="Reactome" id="R-DDI-180024">
    <property type="pathway name" value="DARPP-32 events"/>
</dbReference>
<dbReference type="Reactome" id="R-DDI-418457">
    <property type="pathway name" value="cGMP effects"/>
</dbReference>
<dbReference type="Reactome" id="R-DDI-418555">
    <property type="pathway name" value="G alpha (s) signalling events"/>
</dbReference>
<dbReference type="SABIO-RK" id="B0G0Y8"/>
<dbReference type="PRO" id="PR:B0G0Y8"/>
<dbReference type="Proteomes" id="UP000002195">
    <property type="component" value="Chromosome 1"/>
</dbReference>
<dbReference type="GO" id="GO:0005829">
    <property type="term" value="C:cytosol"/>
    <property type="evidence" value="ECO:0007669"/>
    <property type="project" value="UniProtKB-SubCell"/>
</dbReference>
<dbReference type="GO" id="GO:0004115">
    <property type="term" value="F:3',5'-cyclic-AMP phosphodiesterase activity"/>
    <property type="evidence" value="ECO:0000318"/>
    <property type="project" value="GO_Central"/>
</dbReference>
<dbReference type="GO" id="GO:0047555">
    <property type="term" value="F:3',5'-cyclic-GMP phosphodiesterase activity"/>
    <property type="evidence" value="ECO:0000314"/>
    <property type="project" value="dictyBase"/>
</dbReference>
<dbReference type="GO" id="GO:0030553">
    <property type="term" value="F:cGMP binding"/>
    <property type="evidence" value="ECO:0000314"/>
    <property type="project" value="dictyBase"/>
</dbReference>
<dbReference type="GO" id="GO:0000287">
    <property type="term" value="F:magnesium ion binding"/>
    <property type="evidence" value="ECO:0000314"/>
    <property type="project" value="dictyBase"/>
</dbReference>
<dbReference type="GO" id="GO:0030145">
    <property type="term" value="F:manganese ion binding"/>
    <property type="evidence" value="ECO:0000314"/>
    <property type="project" value="dictyBase"/>
</dbReference>
<dbReference type="GO" id="GO:0019933">
    <property type="term" value="P:cAMP-mediated signaling"/>
    <property type="evidence" value="ECO:0000318"/>
    <property type="project" value="GO_Central"/>
</dbReference>
<dbReference type="GO" id="GO:0019934">
    <property type="term" value="P:cGMP-mediated signaling"/>
    <property type="evidence" value="ECO:0000315"/>
    <property type="project" value="dictyBase"/>
</dbReference>
<dbReference type="FunFam" id="1.10.1300.10:FF:000006">
    <property type="entry name" value="Phosphodiesterase 9A"/>
    <property type="match status" value="1"/>
</dbReference>
<dbReference type="Gene3D" id="1.10.1300.10">
    <property type="entry name" value="3'5'-cyclic nucleotide phosphodiesterase, catalytic domain"/>
    <property type="match status" value="1"/>
</dbReference>
<dbReference type="InterPro" id="IPR003607">
    <property type="entry name" value="HD/PDEase_dom"/>
</dbReference>
<dbReference type="InterPro" id="IPR023088">
    <property type="entry name" value="PDEase"/>
</dbReference>
<dbReference type="InterPro" id="IPR002073">
    <property type="entry name" value="PDEase_catalytic_dom"/>
</dbReference>
<dbReference type="InterPro" id="IPR036971">
    <property type="entry name" value="PDEase_catalytic_dom_sf"/>
</dbReference>
<dbReference type="InterPro" id="IPR023174">
    <property type="entry name" value="PDEase_CS"/>
</dbReference>
<dbReference type="PANTHER" id="PTHR11347">
    <property type="entry name" value="CYCLIC NUCLEOTIDE PHOSPHODIESTERASE"/>
    <property type="match status" value="1"/>
</dbReference>
<dbReference type="Pfam" id="PF00233">
    <property type="entry name" value="PDEase_I"/>
    <property type="match status" value="1"/>
</dbReference>
<dbReference type="PRINTS" id="PR00387">
    <property type="entry name" value="PDIESTERASE1"/>
</dbReference>
<dbReference type="SMART" id="SM00471">
    <property type="entry name" value="HDc"/>
    <property type="match status" value="1"/>
</dbReference>
<dbReference type="SUPFAM" id="SSF109604">
    <property type="entry name" value="HD-domain/PDEase-like"/>
    <property type="match status" value="1"/>
</dbReference>
<dbReference type="PROSITE" id="PS00126">
    <property type="entry name" value="PDEASE_I_1"/>
    <property type="match status" value="1"/>
</dbReference>
<dbReference type="PROSITE" id="PS51845">
    <property type="entry name" value="PDEASE_I_2"/>
    <property type="match status" value="1"/>
</dbReference>
<protein>
    <recommendedName>
        <fullName>cGMP-specific 3',5'-cGMP phosphodiesterase 3</fullName>
        <ecNumber evidence="4">3.1.4.35</ecNumber>
    </recommendedName>
    <alternativeName>
        <fullName>Phosphodiesterase 3</fullName>
        <shortName evidence="7">DdPDE3</shortName>
    </alternativeName>
</protein>
<evidence type="ECO:0000250" key="1"/>
<evidence type="ECO:0000255" key="2">
    <source>
        <dbReference type="PROSITE-ProRule" id="PRU01192"/>
    </source>
</evidence>
<evidence type="ECO:0000256" key="3">
    <source>
        <dbReference type="SAM" id="MobiDB-lite"/>
    </source>
</evidence>
<evidence type="ECO:0000269" key="4">
    <source>
    </source>
</evidence>
<evidence type="ECO:0000269" key="5">
    <source>
    </source>
</evidence>
<evidence type="ECO:0000269" key="6">
    <source>
    </source>
</evidence>
<evidence type="ECO:0000303" key="7">
    <source>
    </source>
</evidence>
<evidence type="ECO:0000305" key="8"/>
<gene>
    <name type="primary">pde3</name>
    <name type="ORF">DDB_G0268634</name>
</gene>
<name>PDE3_DICDI</name>
<accession>B0G0Y8</accession>
<accession>Q8I6Y6</accession>
<proteinExistence type="evidence at protein level"/>
<feature type="chain" id="PRO_0000363969" description="cGMP-specific 3',5'-cGMP phosphodiesterase 3">
    <location>
        <begin position="1"/>
        <end position="466"/>
    </location>
</feature>
<feature type="domain" description="PDEase" evidence="2">
    <location>
        <begin position="137"/>
        <end position="458"/>
    </location>
</feature>
<feature type="region of interest" description="Disordered" evidence="3">
    <location>
        <begin position="1"/>
        <end position="150"/>
    </location>
</feature>
<feature type="compositionally biased region" description="Low complexity" evidence="3">
    <location>
        <begin position="1"/>
        <end position="120"/>
    </location>
</feature>
<feature type="compositionally biased region" description="Acidic residues" evidence="3">
    <location>
        <begin position="123"/>
        <end position="134"/>
    </location>
</feature>
<feature type="compositionally biased region" description="Low complexity" evidence="3">
    <location>
        <begin position="135"/>
        <end position="150"/>
    </location>
</feature>
<feature type="active site" description="Proton donor" evidence="1">
    <location>
        <position position="213"/>
    </location>
</feature>
<feature type="binding site" evidence="1">
    <location>
        <position position="217"/>
    </location>
    <ligand>
        <name>a divalent metal cation</name>
        <dbReference type="ChEBI" id="CHEBI:60240"/>
        <label>1</label>
    </ligand>
</feature>
<feature type="binding site" evidence="1">
    <location>
        <position position="253"/>
    </location>
    <ligand>
        <name>a divalent metal cation</name>
        <dbReference type="ChEBI" id="CHEBI:60240"/>
        <label>1</label>
    </ligand>
</feature>
<feature type="binding site" evidence="1">
    <location>
        <position position="254"/>
    </location>
    <ligand>
        <name>a divalent metal cation</name>
        <dbReference type="ChEBI" id="CHEBI:60240"/>
        <label>1</label>
    </ligand>
</feature>
<feature type="binding site" evidence="1">
    <location>
        <position position="254"/>
    </location>
    <ligand>
        <name>a divalent metal cation</name>
        <dbReference type="ChEBI" id="CHEBI:60240"/>
        <label>2</label>
    </ligand>
</feature>
<feature type="binding site" evidence="1">
    <location>
        <position position="364"/>
    </location>
    <ligand>
        <name>a divalent metal cation</name>
        <dbReference type="ChEBI" id="CHEBI:60240"/>
        <label>1</label>
    </ligand>
</feature>